<accession>A7GLG4</accession>
<feature type="chain" id="PRO_1000078861" description="Potassium-transporting ATPase ATP-binding subunit">
    <location>
        <begin position="1"/>
        <end position="698"/>
    </location>
</feature>
<feature type="transmembrane region" description="Helical" evidence="1">
    <location>
        <begin position="56"/>
        <end position="76"/>
    </location>
</feature>
<feature type="transmembrane region" description="Helical" evidence="1">
    <location>
        <begin position="82"/>
        <end position="102"/>
    </location>
</feature>
<feature type="transmembrane region" description="Helical" evidence="1">
    <location>
        <begin position="240"/>
        <end position="260"/>
    </location>
</feature>
<feature type="transmembrane region" description="Helical" evidence="1">
    <location>
        <begin position="271"/>
        <end position="291"/>
    </location>
</feature>
<feature type="transmembrane region" description="Helical" evidence="1">
    <location>
        <begin position="605"/>
        <end position="625"/>
    </location>
</feature>
<feature type="transmembrane region" description="Helical" evidence="1">
    <location>
        <begin position="633"/>
        <end position="653"/>
    </location>
</feature>
<feature type="transmembrane region" description="Helical" evidence="1">
    <location>
        <begin position="677"/>
        <end position="697"/>
    </location>
</feature>
<feature type="active site" description="4-aspartylphosphate intermediate" evidence="1">
    <location>
        <position position="324"/>
    </location>
</feature>
<feature type="binding site" evidence="1">
    <location>
        <position position="361"/>
    </location>
    <ligand>
        <name>ATP</name>
        <dbReference type="ChEBI" id="CHEBI:30616"/>
    </ligand>
</feature>
<feature type="binding site" evidence="1">
    <location>
        <position position="365"/>
    </location>
    <ligand>
        <name>ATP</name>
        <dbReference type="ChEBI" id="CHEBI:30616"/>
    </ligand>
</feature>
<feature type="binding site" evidence="1">
    <location>
        <begin position="393"/>
        <end position="400"/>
    </location>
    <ligand>
        <name>ATP</name>
        <dbReference type="ChEBI" id="CHEBI:30616"/>
    </ligand>
</feature>
<feature type="binding site" evidence="1">
    <location>
        <position position="412"/>
    </location>
    <ligand>
        <name>ATP</name>
        <dbReference type="ChEBI" id="CHEBI:30616"/>
    </ligand>
</feature>
<feature type="binding site" evidence="1">
    <location>
        <position position="535"/>
    </location>
    <ligand>
        <name>Mg(2+)</name>
        <dbReference type="ChEBI" id="CHEBI:18420"/>
    </ligand>
</feature>
<feature type="binding site" evidence="1">
    <location>
        <position position="539"/>
    </location>
    <ligand>
        <name>Mg(2+)</name>
        <dbReference type="ChEBI" id="CHEBI:18420"/>
    </ligand>
</feature>
<gene>
    <name evidence="1" type="primary">kdpB</name>
    <name type="ordered locus">Bcer98_0625</name>
</gene>
<dbReference type="EC" id="7.2.2.6" evidence="1"/>
<dbReference type="EMBL" id="CP000764">
    <property type="protein sequence ID" value="ABS20972.1"/>
    <property type="molecule type" value="Genomic_DNA"/>
</dbReference>
<dbReference type="RefSeq" id="WP_011983728.1">
    <property type="nucleotide sequence ID" value="NC_009674.1"/>
</dbReference>
<dbReference type="SMR" id="A7GLG4"/>
<dbReference type="STRING" id="315749.Bcer98_0625"/>
<dbReference type="GeneID" id="33896005"/>
<dbReference type="KEGG" id="bcy:Bcer98_0625"/>
<dbReference type="eggNOG" id="COG2216">
    <property type="taxonomic scope" value="Bacteria"/>
</dbReference>
<dbReference type="HOGENOM" id="CLU_025728_2_0_9"/>
<dbReference type="OrthoDB" id="9813266at2"/>
<dbReference type="Proteomes" id="UP000002300">
    <property type="component" value="Chromosome"/>
</dbReference>
<dbReference type="GO" id="GO:0005886">
    <property type="term" value="C:plasma membrane"/>
    <property type="evidence" value="ECO:0007669"/>
    <property type="project" value="UniProtKB-SubCell"/>
</dbReference>
<dbReference type="GO" id="GO:0005524">
    <property type="term" value="F:ATP binding"/>
    <property type="evidence" value="ECO:0007669"/>
    <property type="project" value="UniProtKB-UniRule"/>
</dbReference>
<dbReference type="GO" id="GO:0016887">
    <property type="term" value="F:ATP hydrolysis activity"/>
    <property type="evidence" value="ECO:0007669"/>
    <property type="project" value="InterPro"/>
</dbReference>
<dbReference type="GO" id="GO:0000287">
    <property type="term" value="F:magnesium ion binding"/>
    <property type="evidence" value="ECO:0007669"/>
    <property type="project" value="UniProtKB-UniRule"/>
</dbReference>
<dbReference type="GO" id="GO:0008556">
    <property type="term" value="F:P-type potassium transmembrane transporter activity"/>
    <property type="evidence" value="ECO:0007669"/>
    <property type="project" value="UniProtKB-UniRule"/>
</dbReference>
<dbReference type="CDD" id="cd02078">
    <property type="entry name" value="P-type_ATPase_K"/>
    <property type="match status" value="1"/>
</dbReference>
<dbReference type="FunFam" id="2.70.150.10:FF:000010">
    <property type="entry name" value="Potassium-transporting ATPase ATP-binding subunit"/>
    <property type="match status" value="1"/>
</dbReference>
<dbReference type="FunFam" id="3.40.1110.10:FF:000007">
    <property type="entry name" value="Potassium-transporting ATPase ATP-binding subunit"/>
    <property type="match status" value="1"/>
</dbReference>
<dbReference type="Gene3D" id="3.40.1110.10">
    <property type="entry name" value="Calcium-transporting ATPase, cytoplasmic domain N"/>
    <property type="match status" value="1"/>
</dbReference>
<dbReference type="Gene3D" id="2.70.150.10">
    <property type="entry name" value="Calcium-transporting ATPase, cytoplasmic transduction domain A"/>
    <property type="match status" value="1"/>
</dbReference>
<dbReference type="Gene3D" id="3.40.50.1000">
    <property type="entry name" value="HAD superfamily/HAD-like"/>
    <property type="match status" value="1"/>
</dbReference>
<dbReference type="HAMAP" id="MF_00285">
    <property type="entry name" value="KdpB"/>
    <property type="match status" value="1"/>
</dbReference>
<dbReference type="InterPro" id="IPR023299">
    <property type="entry name" value="ATPase_P-typ_cyto_dom_N"/>
</dbReference>
<dbReference type="InterPro" id="IPR018303">
    <property type="entry name" value="ATPase_P-typ_P_site"/>
</dbReference>
<dbReference type="InterPro" id="IPR023298">
    <property type="entry name" value="ATPase_P-typ_TM_dom_sf"/>
</dbReference>
<dbReference type="InterPro" id="IPR008250">
    <property type="entry name" value="ATPase_P-typ_transduc_dom_A_sf"/>
</dbReference>
<dbReference type="InterPro" id="IPR036412">
    <property type="entry name" value="HAD-like_sf"/>
</dbReference>
<dbReference type="InterPro" id="IPR023214">
    <property type="entry name" value="HAD_sf"/>
</dbReference>
<dbReference type="InterPro" id="IPR006391">
    <property type="entry name" value="P-type_ATPase_bsu_IA"/>
</dbReference>
<dbReference type="InterPro" id="IPR001757">
    <property type="entry name" value="P_typ_ATPase"/>
</dbReference>
<dbReference type="InterPro" id="IPR044492">
    <property type="entry name" value="P_typ_ATPase_HD_dom"/>
</dbReference>
<dbReference type="NCBIfam" id="TIGR01494">
    <property type="entry name" value="ATPase_P-type"/>
    <property type="match status" value="2"/>
</dbReference>
<dbReference type="NCBIfam" id="TIGR01497">
    <property type="entry name" value="kdpB"/>
    <property type="match status" value="1"/>
</dbReference>
<dbReference type="PANTHER" id="PTHR43743">
    <property type="entry name" value="POTASSIUM-TRANSPORTING ATPASE ATP-BINDING SUBUNIT"/>
    <property type="match status" value="1"/>
</dbReference>
<dbReference type="PANTHER" id="PTHR43743:SF1">
    <property type="entry name" value="POTASSIUM-TRANSPORTING ATPASE ATP-BINDING SUBUNIT"/>
    <property type="match status" value="1"/>
</dbReference>
<dbReference type="Pfam" id="PF00122">
    <property type="entry name" value="E1-E2_ATPase"/>
    <property type="match status" value="1"/>
</dbReference>
<dbReference type="Pfam" id="PF00702">
    <property type="entry name" value="Hydrolase"/>
    <property type="match status" value="1"/>
</dbReference>
<dbReference type="PRINTS" id="PR00119">
    <property type="entry name" value="CATATPASE"/>
</dbReference>
<dbReference type="SFLD" id="SFLDG00002">
    <property type="entry name" value="C1.7:_P-type_atpase_like"/>
    <property type="match status" value="1"/>
</dbReference>
<dbReference type="SFLD" id="SFLDF00027">
    <property type="entry name" value="p-type_atpase"/>
    <property type="match status" value="1"/>
</dbReference>
<dbReference type="SUPFAM" id="SSF81653">
    <property type="entry name" value="Calcium ATPase, transduction domain A"/>
    <property type="match status" value="1"/>
</dbReference>
<dbReference type="SUPFAM" id="SSF81665">
    <property type="entry name" value="Calcium ATPase, transmembrane domain M"/>
    <property type="match status" value="1"/>
</dbReference>
<dbReference type="SUPFAM" id="SSF56784">
    <property type="entry name" value="HAD-like"/>
    <property type="match status" value="1"/>
</dbReference>
<dbReference type="PROSITE" id="PS00154">
    <property type="entry name" value="ATPASE_E1_E2"/>
    <property type="match status" value="1"/>
</dbReference>
<evidence type="ECO:0000255" key="1">
    <source>
        <dbReference type="HAMAP-Rule" id="MF_00285"/>
    </source>
</evidence>
<sequence length="698" mass="74781">MRPVIVKGKHVQVMSSSKREDGEVRSAKTMDRDIVSNAFKQAVLKLNPKQMIKNPIMFVVEIGFFITLLLSVVPSLSTNVPLWFNITVTLVLLFTVFFANFAEALAEGRGKAQADSLKQSKKDVYANIVKENGEITRVLASNLKKGDMVLVKQGEMIPGDGEVIRGLASVDESAITGESAPVMKEAGGDFCSVTGGTMVVSDEITIRITSNPGESFLDKMILLVEGATRQKTPNEIALNTVLISLTLIFLIAVVTLPLFTNYLGFQIDTSILVALLVCLIPTTIGGLLSAIGIAGMDRVTKFNVLAMSGKAVEAAGDINTIILDKTGTITFGNRMAHALLPVGNETIEQLAKWAALSSVLDETPEGRSVMDYVQSKGFSYNVSKEEIGEFVPFKAETRMSGMDLKSGEKVRKGAVGAVIDWVQSQRGKIPTDLHQKADLIAKEGGTPLAVAAGNRIFGLIYLKDTVKPGMRERFEQLRQMGIKTMMCTGDNPLTAATIAKEAGVDEFVAECKPEDKIAVIKAEQELGKLVAMTGDGTNDAPALAQADVGLAMNSGTAAAKEAANMIDLDSNPTKIIEVVAIGKQLLMTRGALTTFSIANDVAKYFAIIPAMFTVAIPQMEALNIMGLHSPLSAILSALIFNALIIPMLIPLAMKGIAYKPMSSNTLLFRNLLIYGFGGVLVPFIGIKLVDLVVGLFIS</sequence>
<reference key="1">
    <citation type="journal article" date="2008" name="Chem. Biol. Interact.">
        <title>Extending the Bacillus cereus group genomics to putative food-borne pathogens of different toxicity.</title>
        <authorList>
            <person name="Lapidus A."/>
            <person name="Goltsman E."/>
            <person name="Auger S."/>
            <person name="Galleron N."/>
            <person name="Segurens B."/>
            <person name="Dossat C."/>
            <person name="Land M.L."/>
            <person name="Broussolle V."/>
            <person name="Brillard J."/>
            <person name="Guinebretiere M.-H."/>
            <person name="Sanchis V."/>
            <person name="Nguen-the C."/>
            <person name="Lereclus D."/>
            <person name="Richardson P."/>
            <person name="Wincker P."/>
            <person name="Weissenbach J."/>
            <person name="Ehrlich S.D."/>
            <person name="Sorokin A."/>
        </authorList>
    </citation>
    <scope>NUCLEOTIDE SEQUENCE [LARGE SCALE GENOMIC DNA]</scope>
    <source>
        <strain>DSM 22905 / CIP 110041 / 391-98 / NVH 391-98</strain>
    </source>
</reference>
<keyword id="KW-0067">ATP-binding</keyword>
<keyword id="KW-1003">Cell membrane</keyword>
<keyword id="KW-0406">Ion transport</keyword>
<keyword id="KW-0460">Magnesium</keyword>
<keyword id="KW-0472">Membrane</keyword>
<keyword id="KW-0479">Metal-binding</keyword>
<keyword id="KW-0547">Nucleotide-binding</keyword>
<keyword id="KW-0597">Phosphoprotein</keyword>
<keyword id="KW-0630">Potassium</keyword>
<keyword id="KW-0633">Potassium transport</keyword>
<keyword id="KW-1278">Translocase</keyword>
<keyword id="KW-0812">Transmembrane</keyword>
<keyword id="KW-1133">Transmembrane helix</keyword>
<keyword id="KW-0813">Transport</keyword>
<organism>
    <name type="scientific">Bacillus cytotoxicus (strain DSM 22905 / CIP 110041 / 391-98 / NVH 391-98)</name>
    <dbReference type="NCBI Taxonomy" id="315749"/>
    <lineage>
        <taxon>Bacteria</taxon>
        <taxon>Bacillati</taxon>
        <taxon>Bacillota</taxon>
        <taxon>Bacilli</taxon>
        <taxon>Bacillales</taxon>
        <taxon>Bacillaceae</taxon>
        <taxon>Bacillus</taxon>
        <taxon>Bacillus cereus group</taxon>
    </lineage>
</organism>
<proteinExistence type="inferred from homology"/>
<comment type="function">
    <text evidence="1">Part of the high-affinity ATP-driven potassium transport (or Kdp) system, which catalyzes the hydrolysis of ATP coupled with the electrogenic transport of potassium into the cytoplasm. This subunit is responsible for energy coupling to the transport system and for the release of the potassium ions to the cytoplasm.</text>
</comment>
<comment type="catalytic activity">
    <reaction evidence="1">
        <text>K(+)(out) + ATP + H2O = K(+)(in) + ADP + phosphate + H(+)</text>
        <dbReference type="Rhea" id="RHEA:16777"/>
        <dbReference type="ChEBI" id="CHEBI:15377"/>
        <dbReference type="ChEBI" id="CHEBI:15378"/>
        <dbReference type="ChEBI" id="CHEBI:29103"/>
        <dbReference type="ChEBI" id="CHEBI:30616"/>
        <dbReference type="ChEBI" id="CHEBI:43474"/>
        <dbReference type="ChEBI" id="CHEBI:456216"/>
        <dbReference type="EC" id="7.2.2.6"/>
    </reaction>
    <physiologicalReaction direction="left-to-right" evidence="1">
        <dbReference type="Rhea" id="RHEA:16778"/>
    </physiologicalReaction>
</comment>
<comment type="subunit">
    <text evidence="1">The system is composed of three essential subunits: KdpA, KdpB and KdpC.</text>
</comment>
<comment type="subcellular location">
    <subcellularLocation>
        <location evidence="1">Cell membrane</location>
        <topology evidence="1">Multi-pass membrane protein</topology>
    </subcellularLocation>
</comment>
<comment type="similarity">
    <text evidence="1">Belongs to the cation transport ATPase (P-type) (TC 3.A.3) family. Type IA subfamily.</text>
</comment>
<name>KDPB_BACCN</name>
<protein>
    <recommendedName>
        <fullName evidence="1">Potassium-transporting ATPase ATP-binding subunit</fullName>
        <ecNumber evidence="1">7.2.2.6</ecNumber>
    </recommendedName>
    <alternativeName>
        <fullName evidence="1">ATP phosphohydrolase [potassium-transporting] B chain</fullName>
    </alternativeName>
    <alternativeName>
        <fullName evidence="1">Potassium-binding and translocating subunit B</fullName>
    </alternativeName>
    <alternativeName>
        <fullName evidence="1">Potassium-translocating ATPase B chain</fullName>
    </alternativeName>
</protein>